<evidence type="ECO:0000255" key="1">
    <source>
        <dbReference type="HAMAP-Rule" id="MF_00955"/>
    </source>
</evidence>
<evidence type="ECO:0000269" key="2">
    <source>
    </source>
</evidence>
<evidence type="ECO:0000269" key="3">
    <source>
    </source>
</evidence>
<evidence type="ECO:0000305" key="4"/>
<evidence type="ECO:0007829" key="5">
    <source>
        <dbReference type="PDB" id="1RPN"/>
    </source>
</evidence>
<gene>
    <name evidence="1" type="primary">gmd</name>
    <name type="synonym">gca</name>
    <name type="ordered locus">PA5453</name>
</gene>
<keyword id="KW-0002">3D-structure</keyword>
<keyword id="KW-0448">Lipopolysaccharide biosynthesis</keyword>
<keyword id="KW-0456">Lyase</keyword>
<keyword id="KW-0521">NADP</keyword>
<keyword id="KW-1185">Reference proteome</keyword>
<name>GM4D_PSEAE</name>
<dbReference type="EC" id="4.2.1.47" evidence="1"/>
<dbReference type="EMBL" id="U18320">
    <property type="protein sequence ID" value="AAC44117.1"/>
    <property type="molecule type" value="Genomic_DNA"/>
</dbReference>
<dbReference type="EMBL" id="AE004091">
    <property type="protein sequence ID" value="AAG08838.1"/>
    <property type="molecule type" value="Genomic_DNA"/>
</dbReference>
<dbReference type="PIR" id="G82964">
    <property type="entry name" value="G82964"/>
</dbReference>
<dbReference type="RefSeq" id="NP_254140.1">
    <property type="nucleotide sequence ID" value="NC_002516.2"/>
</dbReference>
<dbReference type="RefSeq" id="WP_003096890.1">
    <property type="nucleotide sequence ID" value="NZ_QZGE01000012.1"/>
</dbReference>
<dbReference type="PDB" id="1RPN">
    <property type="method" value="X-ray"/>
    <property type="resolution" value="2.15 A"/>
    <property type="chains" value="A/B/C/D=1-323"/>
</dbReference>
<dbReference type="PDBsum" id="1RPN"/>
<dbReference type="SMR" id="Q51366"/>
<dbReference type="FunCoup" id="Q51366">
    <property type="interactions" value="428"/>
</dbReference>
<dbReference type="STRING" id="208964.PA5453"/>
<dbReference type="DrugBank" id="DB04315">
    <property type="generic name" value="Guanosine-5'-Diphosphate"/>
</dbReference>
<dbReference type="PaxDb" id="208964-PA5453"/>
<dbReference type="DNASU" id="883089"/>
<dbReference type="GeneID" id="883089"/>
<dbReference type="KEGG" id="pae:PA5453"/>
<dbReference type="PATRIC" id="fig|208964.12.peg.5716"/>
<dbReference type="PseudoCAP" id="PA5453"/>
<dbReference type="HOGENOM" id="CLU_007383_14_0_6"/>
<dbReference type="InParanoid" id="Q51366"/>
<dbReference type="OrthoDB" id="9779041at2"/>
<dbReference type="PhylomeDB" id="Q51366"/>
<dbReference type="BioCyc" id="MetaCyc:MONOMER-12848"/>
<dbReference type="BioCyc" id="PAER208964:G1FZ6-5581-MONOMER"/>
<dbReference type="BRENDA" id="4.2.1.47">
    <property type="organism ID" value="5087"/>
</dbReference>
<dbReference type="UniPathway" id="UPA00030"/>
<dbReference type="EvolutionaryTrace" id="Q51366"/>
<dbReference type="Proteomes" id="UP000002438">
    <property type="component" value="Chromosome"/>
</dbReference>
<dbReference type="GO" id="GO:0008446">
    <property type="term" value="F:GDP-mannose 4,6-dehydratase activity"/>
    <property type="evidence" value="ECO:0000269"/>
    <property type="project" value="PseudoCAP"/>
</dbReference>
<dbReference type="GO" id="GO:0070401">
    <property type="term" value="F:NADP+ binding"/>
    <property type="evidence" value="ECO:0007669"/>
    <property type="project" value="UniProtKB-UniRule"/>
</dbReference>
<dbReference type="GO" id="GO:0042351">
    <property type="term" value="P:'de novo' GDP-L-fucose biosynthetic process"/>
    <property type="evidence" value="ECO:0000318"/>
    <property type="project" value="GO_Central"/>
</dbReference>
<dbReference type="GO" id="GO:0019306">
    <property type="term" value="P:GDP-D-rhamnose biosynthetic process"/>
    <property type="evidence" value="ECO:0000269"/>
    <property type="project" value="PseudoCAP"/>
</dbReference>
<dbReference type="GO" id="GO:0009103">
    <property type="term" value="P:lipopolysaccharide biosynthetic process"/>
    <property type="evidence" value="ECO:0000315"/>
    <property type="project" value="PseudoCAP"/>
</dbReference>
<dbReference type="GO" id="GO:0009243">
    <property type="term" value="P:O antigen biosynthetic process"/>
    <property type="evidence" value="ECO:0000314"/>
    <property type="project" value="PseudoCAP"/>
</dbReference>
<dbReference type="CDD" id="cd05260">
    <property type="entry name" value="GDP_MD_SDR_e"/>
    <property type="match status" value="1"/>
</dbReference>
<dbReference type="FunFam" id="3.40.50.720:FF:000924">
    <property type="entry name" value="GDP-mannose 4,6 dehydratase"/>
    <property type="match status" value="1"/>
</dbReference>
<dbReference type="Gene3D" id="3.40.50.720">
    <property type="entry name" value="NAD(P)-binding Rossmann-like Domain"/>
    <property type="match status" value="1"/>
</dbReference>
<dbReference type="Gene3D" id="3.90.25.10">
    <property type="entry name" value="UDP-galactose 4-epimerase, domain 1"/>
    <property type="match status" value="1"/>
</dbReference>
<dbReference type="HAMAP" id="MF_00955">
    <property type="entry name" value="GDP_Man_dehydratase"/>
    <property type="match status" value="1"/>
</dbReference>
<dbReference type="InterPro" id="IPR006368">
    <property type="entry name" value="GDP_Man_deHydtase"/>
</dbReference>
<dbReference type="InterPro" id="IPR016040">
    <property type="entry name" value="NAD(P)-bd_dom"/>
</dbReference>
<dbReference type="InterPro" id="IPR036291">
    <property type="entry name" value="NAD(P)-bd_dom_sf"/>
</dbReference>
<dbReference type="NCBIfam" id="TIGR01472">
    <property type="entry name" value="gmd"/>
    <property type="match status" value="1"/>
</dbReference>
<dbReference type="PANTHER" id="PTHR43715:SF1">
    <property type="entry name" value="GDP-MANNOSE 4,6 DEHYDRATASE"/>
    <property type="match status" value="1"/>
</dbReference>
<dbReference type="PANTHER" id="PTHR43715">
    <property type="entry name" value="GDP-MANNOSE 4,6-DEHYDRATASE"/>
    <property type="match status" value="1"/>
</dbReference>
<dbReference type="Pfam" id="PF16363">
    <property type="entry name" value="GDP_Man_Dehyd"/>
    <property type="match status" value="1"/>
</dbReference>
<dbReference type="SUPFAM" id="SSF51735">
    <property type="entry name" value="NAD(P)-binding Rossmann-fold domains"/>
    <property type="match status" value="1"/>
</dbReference>
<organism>
    <name type="scientific">Pseudomonas aeruginosa (strain ATCC 15692 / DSM 22644 / CIP 104116 / JCM 14847 / LMG 12228 / 1C / PRS 101 / PAO1)</name>
    <dbReference type="NCBI Taxonomy" id="208964"/>
    <lineage>
        <taxon>Bacteria</taxon>
        <taxon>Pseudomonadati</taxon>
        <taxon>Pseudomonadota</taxon>
        <taxon>Gammaproteobacteria</taxon>
        <taxon>Pseudomonadales</taxon>
        <taxon>Pseudomonadaceae</taxon>
        <taxon>Pseudomonas</taxon>
    </lineage>
</organism>
<proteinExistence type="evidence at protein level"/>
<sequence>MTRSALVTGITGQDGAYLAKLLLEKGYRVHGLVARRSSDTRWRLRELGIEGDIQYEDGDMADACSVQRAVIKAQPQEVYNLAAQSFVGASWNQPVTTGVVDGLGVTHLLEAIRQFSPETRFYQASTSEMFGLIQAERQDENTPFYPRSPYGVAKLYGHWITVNYRESFGLHASSGILFNHESPLRGIEFVTRKVTDAVARIKLGKQQELRLGNVDAKRDWGFAGDYVEAMWLMLQQDKADDYVVATGVTTTVRDMCQIAFEHVGLDYRDFLKIDPAFFRPAEVDVLLGNPAKAQRVLGWKPRTSLDELIRMMVEADLRRVSRE</sequence>
<protein>
    <recommendedName>
        <fullName evidence="1">GDP-mannose 4,6-dehydratase</fullName>
        <ecNumber evidence="1">4.2.1.47</ecNumber>
    </recommendedName>
    <alternativeName>
        <fullName evidence="1">GDP-D-mannose dehydratase</fullName>
    </alternativeName>
</protein>
<feature type="chain" id="PRO_0000201715" description="GDP-mannose 4,6-dehydratase">
    <location>
        <begin position="1"/>
        <end position="323"/>
    </location>
</feature>
<feature type="active site" evidence="1">
    <location>
        <position position="126"/>
    </location>
</feature>
<feature type="active site" description="Nucleophile" evidence="1">
    <location>
        <position position="128"/>
    </location>
</feature>
<feature type="active site" description="Nucleophile" evidence="1">
    <location>
        <position position="150"/>
    </location>
</feature>
<feature type="binding site" evidence="1 2">
    <location>
        <begin position="11"/>
        <end position="14"/>
    </location>
    <ligand>
        <name>NADP(+)</name>
        <dbReference type="ChEBI" id="CHEBI:58349"/>
    </ligand>
</feature>
<feature type="binding site" evidence="1 2">
    <location>
        <position position="36"/>
    </location>
    <ligand>
        <name>NADP(+)</name>
        <dbReference type="ChEBI" id="CHEBI:58349"/>
    </ligand>
</feature>
<feature type="binding site" evidence="1 2">
    <location>
        <begin position="59"/>
        <end position="60"/>
    </location>
    <ligand>
        <name>NADP(+)</name>
        <dbReference type="ChEBI" id="CHEBI:58349"/>
    </ligand>
</feature>
<feature type="binding site" evidence="1 2">
    <location>
        <begin position="81"/>
        <end position="85"/>
    </location>
    <ligand>
        <name>NADP(+)</name>
        <dbReference type="ChEBI" id="CHEBI:58349"/>
    </ligand>
</feature>
<feature type="binding site" evidence="1 2">
    <location>
        <position position="154"/>
    </location>
    <ligand>
        <name>NADP(+)</name>
        <dbReference type="ChEBI" id="CHEBI:58349"/>
    </ligand>
</feature>
<feature type="binding site" evidence="1 2">
    <location>
        <position position="180"/>
    </location>
    <ligand>
        <name>NADP(+)</name>
        <dbReference type="ChEBI" id="CHEBI:58349"/>
    </ligand>
</feature>
<feature type="binding site" evidence="1 2">
    <location>
        <position position="185"/>
    </location>
    <ligand>
        <name>NADP(+)</name>
        <dbReference type="ChEBI" id="CHEBI:58349"/>
    </ligand>
</feature>
<feature type="sequence conflict" description="In Ref. 1; AAC44117." evidence="4" ref="1">
    <original>A</original>
    <variation>V</variation>
    <location>
        <position position="153"/>
    </location>
</feature>
<feature type="sequence conflict" description="In Ref. 1; AAC44117." evidence="4" ref="1">
    <original>S</original>
    <variation>N</variation>
    <location>
        <position position="167"/>
    </location>
</feature>
<feature type="sequence conflict" description="In Ref. 1; AAC44117." evidence="4" ref="1">
    <original>A</original>
    <variation>V</variation>
    <location>
        <position position="216"/>
    </location>
</feature>
<feature type="sequence conflict" description="In Ref. 1; AAC44117." evidence="4" ref="1">
    <original>A</original>
    <variation>G</variation>
    <location>
        <position position="223"/>
    </location>
</feature>
<feature type="sequence conflict" description="In Ref. 1; AAC44117." evidence="4" ref="1">
    <original>G</original>
    <variation>V</variation>
    <location>
        <position position="247"/>
    </location>
</feature>
<feature type="strand" evidence="5">
    <location>
        <begin position="4"/>
        <end position="8"/>
    </location>
</feature>
<feature type="turn" evidence="5">
    <location>
        <begin position="9"/>
        <end position="11"/>
    </location>
</feature>
<feature type="helix" evidence="5">
    <location>
        <begin position="13"/>
        <end position="24"/>
    </location>
</feature>
<feature type="strand" evidence="5">
    <location>
        <begin position="28"/>
        <end position="33"/>
    </location>
</feature>
<feature type="helix" evidence="5">
    <location>
        <begin position="42"/>
        <end position="46"/>
    </location>
</feature>
<feature type="helix" evidence="5">
    <location>
        <begin position="50"/>
        <end position="52"/>
    </location>
</feature>
<feature type="strand" evidence="5">
    <location>
        <begin position="53"/>
        <end position="57"/>
    </location>
</feature>
<feature type="helix" evidence="5">
    <location>
        <begin position="63"/>
        <end position="73"/>
    </location>
</feature>
<feature type="strand" evidence="5">
    <location>
        <begin position="76"/>
        <end position="80"/>
    </location>
</feature>
<feature type="helix" evidence="5">
    <location>
        <begin position="87"/>
        <end position="90"/>
    </location>
</feature>
<feature type="helix" evidence="5">
    <location>
        <begin position="94"/>
        <end position="101"/>
    </location>
</feature>
<feature type="helix" evidence="5">
    <location>
        <begin position="103"/>
        <end position="115"/>
    </location>
</feature>
<feature type="strand" evidence="5">
    <location>
        <begin position="119"/>
        <end position="126"/>
    </location>
</feature>
<feature type="helix" evidence="5">
    <location>
        <begin position="127"/>
        <end position="130"/>
    </location>
</feature>
<feature type="strand" evidence="5">
    <location>
        <begin position="134"/>
        <end position="138"/>
    </location>
</feature>
<feature type="helix" evidence="5">
    <location>
        <begin position="149"/>
        <end position="168"/>
    </location>
</feature>
<feature type="strand" evidence="5">
    <location>
        <begin position="172"/>
        <end position="177"/>
    </location>
</feature>
<feature type="helix" evidence="5">
    <location>
        <begin position="190"/>
        <end position="202"/>
    </location>
</feature>
<feature type="strand" evidence="5">
    <location>
        <begin position="209"/>
        <end position="212"/>
    </location>
</feature>
<feature type="strand" evidence="5">
    <location>
        <begin position="217"/>
        <end position="219"/>
    </location>
</feature>
<feature type="helix" evidence="5">
    <location>
        <begin position="223"/>
        <end position="235"/>
    </location>
</feature>
<feature type="strand" evidence="5">
    <location>
        <begin position="236"/>
        <end position="238"/>
    </location>
</feature>
<feature type="strand" evidence="5">
    <location>
        <begin position="242"/>
        <end position="244"/>
    </location>
</feature>
<feature type="strand" evidence="5">
    <location>
        <begin position="249"/>
        <end position="251"/>
    </location>
</feature>
<feature type="helix" evidence="5">
    <location>
        <begin position="252"/>
        <end position="261"/>
    </location>
</feature>
<feature type="turn" evidence="5">
    <location>
        <begin position="262"/>
        <end position="264"/>
    </location>
</feature>
<feature type="helix" evidence="5">
    <location>
        <begin position="267"/>
        <end position="269"/>
    </location>
</feature>
<feature type="strand" evidence="5">
    <location>
        <begin position="271"/>
        <end position="273"/>
    </location>
</feature>
<feature type="helix" evidence="5">
    <location>
        <begin position="275"/>
        <end position="277"/>
    </location>
</feature>
<feature type="helix" evidence="5">
    <location>
        <begin position="291"/>
        <end position="297"/>
    </location>
</feature>
<feature type="helix" evidence="5">
    <location>
        <begin position="305"/>
        <end position="322"/>
    </location>
</feature>
<accession>Q51366</accession>
<reference key="1">
    <citation type="journal article" date="1995" name="Clin. Diagn. Lab. Immunol.">
        <title>Prevalence of gca, a gene involved in synthesis of A-band common antigen polysaccharide in Pseudomonas aeruginosa.</title>
        <authorList>
            <person name="Currie H.L."/>
            <person name="Lightfoot J."/>
            <person name="Lam J.S."/>
        </authorList>
    </citation>
    <scope>NUCLEOTIDE SEQUENCE [GENOMIC DNA]</scope>
    <scope>PATHWAY</scope>
    <source>
        <strain>IATS O5</strain>
    </source>
</reference>
<reference key="2">
    <citation type="journal article" date="2000" name="Nature">
        <title>Complete genome sequence of Pseudomonas aeruginosa PAO1, an opportunistic pathogen.</title>
        <authorList>
            <person name="Stover C.K."/>
            <person name="Pham X.-Q.T."/>
            <person name="Erwin A.L."/>
            <person name="Mizoguchi S.D."/>
            <person name="Warrener P."/>
            <person name="Hickey M.J."/>
            <person name="Brinkman F.S.L."/>
            <person name="Hufnagle W.O."/>
            <person name="Kowalik D.J."/>
            <person name="Lagrou M."/>
            <person name="Garber R.L."/>
            <person name="Goltry L."/>
            <person name="Tolentino E."/>
            <person name="Westbrock-Wadman S."/>
            <person name="Yuan Y."/>
            <person name="Brody L.L."/>
            <person name="Coulter S.N."/>
            <person name="Folger K.R."/>
            <person name="Kas A."/>
            <person name="Larbig K."/>
            <person name="Lim R.M."/>
            <person name="Smith K.A."/>
            <person name="Spencer D.H."/>
            <person name="Wong G.K.-S."/>
            <person name="Wu Z."/>
            <person name="Paulsen I.T."/>
            <person name="Reizer J."/>
            <person name="Saier M.H. Jr."/>
            <person name="Hancock R.E.W."/>
            <person name="Lory S."/>
            <person name="Olson M.V."/>
        </authorList>
    </citation>
    <scope>NUCLEOTIDE SEQUENCE [LARGE SCALE GENOMIC DNA]</scope>
    <source>
        <strain>ATCC 15692 / DSM 22644 / CIP 104116 / JCM 14847 / LMG 12228 / 1C / PRS 101 / PAO1</strain>
    </source>
</reference>
<reference key="3">
    <citation type="journal article" date="2004" name="Protein Sci.">
        <title>Crystal structure of a tetrameric GDP-D-mannose 4,6-dehydratase from a bacterial GDP-D-rhamnose biosynthetic pathway.</title>
        <authorList>
            <person name="Webb N.A."/>
            <person name="Mulichak A.M."/>
            <person name="Lam J.S."/>
            <person name="Rocchetta H.L."/>
            <person name="Garavito R.M."/>
        </authorList>
    </citation>
    <scope>X-RAY CRYSTALLOGRAPHY (2.15 ANGSTROMS) IN COMPLEX WITH NADP</scope>
    <scope>FUNCTION</scope>
    <scope>CATALYTIC ACTIVITY</scope>
    <scope>COFACTOR</scope>
    <scope>SUBUNIT</scope>
</reference>
<comment type="function">
    <text evidence="1 2">Catalyzes the conversion of GDP-D-mannose to GDP-4-dehydro-6-deoxy-D-mannose.</text>
</comment>
<comment type="catalytic activity">
    <reaction evidence="1 2">
        <text>GDP-alpha-D-mannose = GDP-4-dehydro-alpha-D-rhamnose + H2O</text>
        <dbReference type="Rhea" id="RHEA:23820"/>
        <dbReference type="ChEBI" id="CHEBI:15377"/>
        <dbReference type="ChEBI" id="CHEBI:57527"/>
        <dbReference type="ChEBI" id="CHEBI:57964"/>
        <dbReference type="EC" id="4.2.1.47"/>
    </reaction>
</comment>
<comment type="cofactor">
    <cofactor evidence="1 2">
        <name>NADP(+)</name>
        <dbReference type="ChEBI" id="CHEBI:58349"/>
    </cofactor>
</comment>
<comment type="pathway">
    <text evidence="3">Bacterial outer membrane biogenesis; lipopolysaccharide biosynthesis.</text>
</comment>
<comment type="subunit">
    <text evidence="2">Homotetramer.</text>
</comment>
<comment type="similarity">
    <text evidence="1">Belongs to the NAD(P)-dependent epimerase/dehydratase family. GDP-mannose 4,6-dehydratase subfamily.</text>
</comment>